<reference key="1">
    <citation type="journal article" date="2004" name="Proc. Natl. Acad. Sci. U.S.A.">
        <title>Structural flexibility in the Burkholderia mallei genome.</title>
        <authorList>
            <person name="Nierman W.C."/>
            <person name="DeShazer D."/>
            <person name="Kim H.S."/>
            <person name="Tettelin H."/>
            <person name="Nelson K.E."/>
            <person name="Feldblyum T.V."/>
            <person name="Ulrich R.L."/>
            <person name="Ronning C.M."/>
            <person name="Brinkac L.M."/>
            <person name="Daugherty S.C."/>
            <person name="Davidsen T.D."/>
            <person name="DeBoy R.T."/>
            <person name="Dimitrov G."/>
            <person name="Dodson R.J."/>
            <person name="Durkin A.S."/>
            <person name="Gwinn M.L."/>
            <person name="Haft D.H."/>
            <person name="Khouri H.M."/>
            <person name="Kolonay J.F."/>
            <person name="Madupu R."/>
            <person name="Mohammoud Y."/>
            <person name="Nelson W.C."/>
            <person name="Radune D."/>
            <person name="Romero C.M."/>
            <person name="Sarria S."/>
            <person name="Selengut J."/>
            <person name="Shamblin C."/>
            <person name="Sullivan S.A."/>
            <person name="White O."/>
            <person name="Yu Y."/>
            <person name="Zafar N."/>
            <person name="Zhou L."/>
            <person name="Fraser C.M."/>
        </authorList>
    </citation>
    <scope>NUCLEOTIDE SEQUENCE [LARGE SCALE GENOMIC DNA]</scope>
    <source>
        <strain>ATCC 23344</strain>
    </source>
</reference>
<feature type="chain" id="PRO_0000129797" description="Small ribosomal subunit protein uS19">
    <location>
        <begin position="1"/>
        <end position="91"/>
    </location>
</feature>
<protein>
    <recommendedName>
        <fullName evidence="1">Small ribosomal subunit protein uS19</fullName>
    </recommendedName>
    <alternativeName>
        <fullName evidence="2">30S ribosomal protein S19</fullName>
    </alternativeName>
</protein>
<keyword id="KW-1185">Reference proteome</keyword>
<keyword id="KW-0687">Ribonucleoprotein</keyword>
<keyword id="KW-0689">Ribosomal protein</keyword>
<keyword id="KW-0694">RNA-binding</keyword>
<keyword id="KW-0699">rRNA-binding</keyword>
<name>RS19_BURMA</name>
<comment type="function">
    <text evidence="1">Protein S19 forms a complex with S13 that binds strongly to the 16S ribosomal RNA.</text>
</comment>
<comment type="similarity">
    <text evidence="1">Belongs to the universal ribosomal protein uS19 family.</text>
</comment>
<accession>Q62GK9</accession>
<organism>
    <name type="scientific">Burkholderia mallei (strain ATCC 23344)</name>
    <dbReference type="NCBI Taxonomy" id="243160"/>
    <lineage>
        <taxon>Bacteria</taxon>
        <taxon>Pseudomonadati</taxon>
        <taxon>Pseudomonadota</taxon>
        <taxon>Betaproteobacteria</taxon>
        <taxon>Burkholderiales</taxon>
        <taxon>Burkholderiaceae</taxon>
        <taxon>Burkholderia</taxon>
        <taxon>pseudomallei group</taxon>
    </lineage>
</organism>
<proteinExistence type="inferred from homology"/>
<gene>
    <name evidence="1" type="primary">rpsS</name>
    <name type="ordered locus">BMA2628</name>
</gene>
<dbReference type="EMBL" id="CP000010">
    <property type="protein sequence ID" value="AAU47866.1"/>
    <property type="molecule type" value="Genomic_DNA"/>
</dbReference>
<dbReference type="RefSeq" id="WP_004199273.1">
    <property type="nucleotide sequence ID" value="NC_006348.1"/>
</dbReference>
<dbReference type="RefSeq" id="YP_104162.1">
    <property type="nucleotide sequence ID" value="NC_006348.1"/>
</dbReference>
<dbReference type="SMR" id="Q62GK9"/>
<dbReference type="GeneID" id="98107156"/>
<dbReference type="KEGG" id="bma:BMA2628"/>
<dbReference type="PATRIC" id="fig|243160.12.peg.2699"/>
<dbReference type="eggNOG" id="COG0185">
    <property type="taxonomic scope" value="Bacteria"/>
</dbReference>
<dbReference type="HOGENOM" id="CLU_144911_0_1_4"/>
<dbReference type="PRO" id="PR:Q62GK9"/>
<dbReference type="Proteomes" id="UP000006693">
    <property type="component" value="Chromosome 1"/>
</dbReference>
<dbReference type="GO" id="GO:0005737">
    <property type="term" value="C:cytoplasm"/>
    <property type="evidence" value="ECO:0007669"/>
    <property type="project" value="UniProtKB-ARBA"/>
</dbReference>
<dbReference type="GO" id="GO:0015935">
    <property type="term" value="C:small ribosomal subunit"/>
    <property type="evidence" value="ECO:0007669"/>
    <property type="project" value="InterPro"/>
</dbReference>
<dbReference type="GO" id="GO:0019843">
    <property type="term" value="F:rRNA binding"/>
    <property type="evidence" value="ECO:0007669"/>
    <property type="project" value="UniProtKB-UniRule"/>
</dbReference>
<dbReference type="GO" id="GO:0003735">
    <property type="term" value="F:structural constituent of ribosome"/>
    <property type="evidence" value="ECO:0007669"/>
    <property type="project" value="InterPro"/>
</dbReference>
<dbReference type="GO" id="GO:0000028">
    <property type="term" value="P:ribosomal small subunit assembly"/>
    <property type="evidence" value="ECO:0007669"/>
    <property type="project" value="TreeGrafter"/>
</dbReference>
<dbReference type="GO" id="GO:0006412">
    <property type="term" value="P:translation"/>
    <property type="evidence" value="ECO:0007669"/>
    <property type="project" value="UniProtKB-UniRule"/>
</dbReference>
<dbReference type="FunFam" id="3.30.860.10:FF:000001">
    <property type="entry name" value="30S ribosomal protein S19"/>
    <property type="match status" value="1"/>
</dbReference>
<dbReference type="Gene3D" id="3.30.860.10">
    <property type="entry name" value="30s Ribosomal Protein S19, Chain A"/>
    <property type="match status" value="1"/>
</dbReference>
<dbReference type="HAMAP" id="MF_00531">
    <property type="entry name" value="Ribosomal_uS19"/>
    <property type="match status" value="1"/>
</dbReference>
<dbReference type="InterPro" id="IPR002222">
    <property type="entry name" value="Ribosomal_uS19"/>
</dbReference>
<dbReference type="InterPro" id="IPR005732">
    <property type="entry name" value="Ribosomal_uS19_bac-type"/>
</dbReference>
<dbReference type="InterPro" id="IPR020934">
    <property type="entry name" value="Ribosomal_uS19_CS"/>
</dbReference>
<dbReference type="InterPro" id="IPR023575">
    <property type="entry name" value="Ribosomal_uS19_SF"/>
</dbReference>
<dbReference type="NCBIfam" id="TIGR01050">
    <property type="entry name" value="rpsS_bact"/>
    <property type="match status" value="1"/>
</dbReference>
<dbReference type="PANTHER" id="PTHR11880">
    <property type="entry name" value="RIBOSOMAL PROTEIN S19P FAMILY MEMBER"/>
    <property type="match status" value="1"/>
</dbReference>
<dbReference type="PANTHER" id="PTHR11880:SF8">
    <property type="entry name" value="SMALL RIBOSOMAL SUBUNIT PROTEIN US19M"/>
    <property type="match status" value="1"/>
</dbReference>
<dbReference type="Pfam" id="PF00203">
    <property type="entry name" value="Ribosomal_S19"/>
    <property type="match status" value="1"/>
</dbReference>
<dbReference type="PIRSF" id="PIRSF002144">
    <property type="entry name" value="Ribosomal_S19"/>
    <property type="match status" value="1"/>
</dbReference>
<dbReference type="PRINTS" id="PR00975">
    <property type="entry name" value="RIBOSOMALS19"/>
</dbReference>
<dbReference type="SUPFAM" id="SSF54570">
    <property type="entry name" value="Ribosomal protein S19"/>
    <property type="match status" value="1"/>
</dbReference>
<dbReference type="PROSITE" id="PS00323">
    <property type="entry name" value="RIBOSOMAL_S19"/>
    <property type="match status" value="1"/>
</dbReference>
<evidence type="ECO:0000255" key="1">
    <source>
        <dbReference type="HAMAP-Rule" id="MF_00531"/>
    </source>
</evidence>
<evidence type="ECO:0000305" key="2"/>
<sequence>MARSVKKGPFCDAHLLKKVEAAAASRDKKPIKTWSRRSTILPDFIGLTIAVHNGRQHVPVYISENMVGHKLGEFALTRTFKGHAADKKAKK</sequence>